<organism>
    <name type="scientific">Clostridium botulinum (strain Loch Maree / Type A3)</name>
    <dbReference type="NCBI Taxonomy" id="498214"/>
    <lineage>
        <taxon>Bacteria</taxon>
        <taxon>Bacillati</taxon>
        <taxon>Bacillota</taxon>
        <taxon>Clostridia</taxon>
        <taxon>Eubacteriales</taxon>
        <taxon>Clostridiaceae</taxon>
        <taxon>Clostridium</taxon>
    </lineage>
</organism>
<comment type="function">
    <text evidence="1">Peptide chain release factor 1 directs the termination of translation in response to the peptide chain termination codons UAG and UAA.</text>
</comment>
<comment type="subcellular location">
    <subcellularLocation>
        <location evidence="1">Cytoplasm</location>
    </subcellularLocation>
</comment>
<comment type="PTM">
    <text evidence="1">Methylated by PrmC. Methylation increases the termination efficiency of RF1.</text>
</comment>
<comment type="similarity">
    <text evidence="1">Belongs to the prokaryotic/mitochondrial release factor family.</text>
</comment>
<reference key="1">
    <citation type="journal article" date="2007" name="PLoS ONE">
        <title>Analysis of the neurotoxin complex genes in Clostridium botulinum A1-A4 and B1 strains: BoNT/A3, /Ba4 and /B1 clusters are located within plasmids.</title>
        <authorList>
            <person name="Smith T.J."/>
            <person name="Hill K.K."/>
            <person name="Foley B.T."/>
            <person name="Detter J.C."/>
            <person name="Munk A.C."/>
            <person name="Bruce D.C."/>
            <person name="Doggett N.A."/>
            <person name="Smith L.A."/>
            <person name="Marks J.D."/>
            <person name="Xie G."/>
            <person name="Brettin T.S."/>
        </authorList>
    </citation>
    <scope>NUCLEOTIDE SEQUENCE [LARGE SCALE GENOMIC DNA]</scope>
    <source>
        <strain>Loch Maree / Type A3</strain>
    </source>
</reference>
<evidence type="ECO:0000255" key="1">
    <source>
        <dbReference type="HAMAP-Rule" id="MF_00093"/>
    </source>
</evidence>
<dbReference type="EMBL" id="CP000962">
    <property type="protein sequence ID" value="ACA56598.1"/>
    <property type="molecule type" value="Genomic_DNA"/>
</dbReference>
<dbReference type="SMR" id="B1KSR1"/>
<dbReference type="KEGG" id="cbl:CLK_3314"/>
<dbReference type="HOGENOM" id="CLU_036856_0_1_9"/>
<dbReference type="GO" id="GO:0005737">
    <property type="term" value="C:cytoplasm"/>
    <property type="evidence" value="ECO:0007669"/>
    <property type="project" value="UniProtKB-SubCell"/>
</dbReference>
<dbReference type="GO" id="GO:0016149">
    <property type="term" value="F:translation release factor activity, codon specific"/>
    <property type="evidence" value="ECO:0007669"/>
    <property type="project" value="UniProtKB-UniRule"/>
</dbReference>
<dbReference type="FunFam" id="3.30.160.20:FF:000004">
    <property type="entry name" value="Peptide chain release factor 1"/>
    <property type="match status" value="1"/>
</dbReference>
<dbReference type="FunFam" id="3.30.70.1660:FF:000002">
    <property type="entry name" value="Peptide chain release factor 1"/>
    <property type="match status" value="1"/>
</dbReference>
<dbReference type="FunFam" id="3.30.70.1660:FF:000004">
    <property type="entry name" value="Peptide chain release factor 1"/>
    <property type="match status" value="1"/>
</dbReference>
<dbReference type="Gene3D" id="3.30.160.20">
    <property type="match status" value="1"/>
</dbReference>
<dbReference type="Gene3D" id="3.30.70.1660">
    <property type="match status" value="1"/>
</dbReference>
<dbReference type="Gene3D" id="6.10.140.1950">
    <property type="match status" value="1"/>
</dbReference>
<dbReference type="HAMAP" id="MF_00093">
    <property type="entry name" value="Rel_fac_1"/>
    <property type="match status" value="1"/>
</dbReference>
<dbReference type="InterPro" id="IPR005139">
    <property type="entry name" value="PCRF"/>
</dbReference>
<dbReference type="InterPro" id="IPR000352">
    <property type="entry name" value="Pep_chain_release_fac_I"/>
</dbReference>
<dbReference type="InterPro" id="IPR045853">
    <property type="entry name" value="Pep_chain_release_fac_I_sf"/>
</dbReference>
<dbReference type="InterPro" id="IPR050057">
    <property type="entry name" value="Prokaryotic/Mito_RF"/>
</dbReference>
<dbReference type="InterPro" id="IPR004373">
    <property type="entry name" value="RF-1"/>
</dbReference>
<dbReference type="NCBIfam" id="TIGR00019">
    <property type="entry name" value="prfA"/>
    <property type="match status" value="1"/>
</dbReference>
<dbReference type="NCBIfam" id="NF001859">
    <property type="entry name" value="PRK00591.1"/>
    <property type="match status" value="1"/>
</dbReference>
<dbReference type="PANTHER" id="PTHR43804">
    <property type="entry name" value="LD18447P"/>
    <property type="match status" value="1"/>
</dbReference>
<dbReference type="PANTHER" id="PTHR43804:SF7">
    <property type="entry name" value="LD18447P"/>
    <property type="match status" value="1"/>
</dbReference>
<dbReference type="Pfam" id="PF03462">
    <property type="entry name" value="PCRF"/>
    <property type="match status" value="1"/>
</dbReference>
<dbReference type="Pfam" id="PF00472">
    <property type="entry name" value="RF-1"/>
    <property type="match status" value="1"/>
</dbReference>
<dbReference type="SMART" id="SM00937">
    <property type="entry name" value="PCRF"/>
    <property type="match status" value="1"/>
</dbReference>
<dbReference type="SUPFAM" id="SSF75620">
    <property type="entry name" value="Release factor"/>
    <property type="match status" value="1"/>
</dbReference>
<dbReference type="PROSITE" id="PS00745">
    <property type="entry name" value="RF_PROK_I"/>
    <property type="match status" value="1"/>
</dbReference>
<gene>
    <name evidence="1" type="primary">prfA</name>
    <name type="ordered locus">CLK_3314</name>
</gene>
<feature type="chain" id="PRO_1000093444" description="Peptide chain release factor 1">
    <location>
        <begin position="1"/>
        <end position="358"/>
    </location>
</feature>
<feature type="modified residue" description="N5-methylglutamine" evidence="1">
    <location>
        <position position="233"/>
    </location>
</feature>
<proteinExistence type="inferred from homology"/>
<protein>
    <recommendedName>
        <fullName evidence="1">Peptide chain release factor 1</fullName>
        <shortName evidence="1">RF-1</shortName>
    </recommendedName>
</protein>
<keyword id="KW-0963">Cytoplasm</keyword>
<keyword id="KW-0488">Methylation</keyword>
<keyword id="KW-0648">Protein biosynthesis</keyword>
<name>RF1_CLOBM</name>
<accession>B1KSR1</accession>
<sequence>MLERLNFIENKYEELSNKISDPSVMANQKEWQKLCKEHADLEIIVNTYREYKKAQEDLESDKEMLKEESDKELREMAQEEIKELTLKLEDLERELTILLLPKDPNDDKDVFIEIRAGAGGEEAALFASNLLRMYTRYAERKNWKVETISLNATDIGGFKEVTVAVKGKGAYSRLKYESGVHRVQRVPDTESSGRIHTSTATVAVLPEVDDVDININANDLRIDVYRASGHGGQCVNTTDSAVRITHLPTGLVVTCQDEKSQLKNKEKAMKVLKARLFEAAEAERAASIAEDRKSQVGTGDRSERIRTYNYPQGRITDHRIGLTLYKLETFLDGDIDEAIEALVTEDQAEKMKNLGRVN</sequence>